<proteinExistence type="evidence at protein level"/>
<feature type="transit peptide" description="Mitochondrion" evidence="10">
    <location>
        <begin position="1"/>
        <end position="57"/>
    </location>
</feature>
<feature type="chain" id="PRO_0000007205" description="Glutamate dehydrogenase 1, mitochondrial">
    <location>
        <begin position="58"/>
        <end position="558"/>
    </location>
</feature>
<feature type="active site" evidence="4">
    <location>
        <position position="183"/>
    </location>
</feature>
<feature type="binding site" evidence="5">
    <location>
        <begin position="141"/>
        <end position="143"/>
    </location>
    <ligand>
        <name>NAD(+)</name>
        <dbReference type="ChEBI" id="CHEBI:57540"/>
    </ligand>
</feature>
<feature type="binding site" evidence="5">
    <location>
        <position position="147"/>
    </location>
    <ligand>
        <name>substrate</name>
    </ligand>
</feature>
<feature type="binding site" evidence="5">
    <location>
        <position position="171"/>
    </location>
    <ligand>
        <name>substrate</name>
    </ligand>
</feature>
<feature type="binding site" evidence="5">
    <location>
        <position position="176"/>
    </location>
    <ligand>
        <name>NAD(+)</name>
        <dbReference type="ChEBI" id="CHEBI:57540"/>
    </ligand>
</feature>
<feature type="binding site" evidence="5">
    <location>
        <position position="252"/>
    </location>
    <ligand>
        <name>NAD(+)</name>
        <dbReference type="ChEBI" id="CHEBI:57540"/>
    </ligand>
</feature>
<feature type="binding site" evidence="5">
    <location>
        <position position="266"/>
    </location>
    <ligand>
        <name>GTP</name>
        <dbReference type="ChEBI" id="CHEBI:37565"/>
    </ligand>
</feature>
<feature type="binding site" evidence="5">
    <location>
        <position position="270"/>
    </location>
    <ligand>
        <name>GTP</name>
        <dbReference type="ChEBI" id="CHEBI:37565"/>
    </ligand>
</feature>
<feature type="binding site" evidence="5">
    <location>
        <position position="319"/>
    </location>
    <ligand>
        <name>GTP</name>
        <dbReference type="ChEBI" id="CHEBI:37565"/>
    </ligand>
</feature>
<feature type="binding site" evidence="5">
    <location>
        <position position="322"/>
    </location>
    <ligand>
        <name>GTP</name>
        <dbReference type="ChEBI" id="CHEBI:37565"/>
    </ligand>
</feature>
<feature type="binding site" evidence="5">
    <location>
        <position position="438"/>
    </location>
    <ligand>
        <name>substrate</name>
    </ligand>
</feature>
<feature type="binding site" evidence="5">
    <location>
        <position position="444"/>
    </location>
    <ligand>
        <name>NAD(+)</name>
        <dbReference type="ChEBI" id="CHEBI:57540"/>
    </ligand>
</feature>
<feature type="binding site" evidence="6">
    <location>
        <position position="450"/>
    </location>
    <ligand>
        <name>ADP</name>
        <dbReference type="ChEBI" id="CHEBI:456216"/>
    </ligand>
</feature>
<feature type="binding site" evidence="6">
    <location>
        <position position="516"/>
    </location>
    <ligand>
        <name>ADP</name>
        <dbReference type="ChEBI" id="CHEBI:456216"/>
    </ligand>
</feature>
<feature type="modified residue" description="N6-succinyllysine" evidence="3">
    <location>
        <position position="68"/>
    </location>
</feature>
<feature type="modified residue" description="Phosphoserine" evidence="3">
    <location>
        <position position="79"/>
    </location>
</feature>
<feature type="modified residue" description="N6-acetyllysine; alternate" evidence="8">
    <location>
        <position position="84"/>
    </location>
</feature>
<feature type="modified residue" description="N6-succinyllysine; alternate" evidence="8">
    <location>
        <position position="84"/>
    </location>
</feature>
<feature type="modified residue" description="N6-acetyllysine" evidence="8">
    <location>
        <position position="90"/>
    </location>
</feature>
<feature type="modified residue" description="N6-acetyllysine; alternate" evidence="8">
    <location>
        <position position="110"/>
    </location>
</feature>
<feature type="modified residue" description="N6-succinyllysine; alternate" evidence="8">
    <location>
        <position position="110"/>
    </location>
</feature>
<feature type="modified residue" description="Phosphoserine" evidence="3">
    <location>
        <position position="128"/>
    </location>
</feature>
<feature type="modified residue" description="Phosphotyrosine" evidence="3">
    <location>
        <position position="135"/>
    </location>
</feature>
<feature type="modified residue" description="N6-(2-hydroxyisobutyryl)lysine" evidence="1">
    <location>
        <position position="147"/>
    </location>
</feature>
<feature type="modified residue" description="N6-acetyllysine; alternate" evidence="8">
    <location>
        <position position="162"/>
    </location>
</feature>
<feature type="modified residue" description="N6-succinyllysine; alternate" evidence="8">
    <location>
        <position position="162"/>
    </location>
</feature>
<feature type="modified residue" description="N6-acetyllysine" evidence="3">
    <location>
        <position position="171"/>
    </location>
</feature>
<feature type="modified residue" description="ADP-ribosylcysteine" evidence="1">
    <location>
        <position position="172"/>
    </location>
</feature>
<feature type="modified residue" description="N6-acetyllysine; alternate" evidence="8">
    <location>
        <position position="183"/>
    </location>
</feature>
<feature type="modified residue" description="N6-succinyllysine; alternate" evidence="3">
    <location>
        <position position="183"/>
    </location>
</feature>
<feature type="modified residue" description="N6-acetyllysine" evidence="3">
    <location>
        <position position="187"/>
    </location>
</feature>
<feature type="modified residue" description="N6-acetyllysine; alternate" evidence="8">
    <location>
        <position position="191"/>
    </location>
</feature>
<feature type="modified residue" description="N6-succinyllysine; alternate" evidence="3">
    <location>
        <position position="191"/>
    </location>
</feature>
<feature type="modified residue" description="N6-succinyllysine" evidence="3">
    <location>
        <position position="200"/>
    </location>
</feature>
<feature type="modified residue" description="N6-acetyllysine" evidence="3">
    <location>
        <position position="211"/>
    </location>
</feature>
<feature type="modified residue" description="Phosphoserine" evidence="1">
    <location>
        <position position="227"/>
    </location>
</feature>
<feature type="modified residue" description="N6-acetyllysine" evidence="3">
    <location>
        <position position="326"/>
    </location>
</feature>
<feature type="modified residue" description="N6-acetyllysine; alternate" evidence="3">
    <location>
        <position position="346"/>
    </location>
</feature>
<feature type="modified residue" description="N6-succinyllysine; alternate" evidence="3">
    <location>
        <position position="346"/>
    </location>
</feature>
<feature type="modified residue" description="N6-acetyllysine; alternate" evidence="3">
    <location>
        <position position="352"/>
    </location>
</feature>
<feature type="modified residue" description="N6-succinyllysine; alternate" evidence="3">
    <location>
        <position position="352"/>
    </location>
</feature>
<feature type="modified residue" description="N6-acetyllysine; alternate" evidence="8">
    <location>
        <position position="363"/>
    </location>
</feature>
<feature type="modified residue" description="N6-succinyllysine; alternate" evidence="8">
    <location>
        <position position="363"/>
    </location>
</feature>
<feature type="modified residue" description="N6-acetyllysine; alternate" evidence="8">
    <location>
        <position position="365"/>
    </location>
</feature>
<feature type="modified residue" description="N6-succinyllysine; alternate" evidence="3">
    <location>
        <position position="365"/>
    </location>
</feature>
<feature type="modified residue" description="Phosphoserine" evidence="1">
    <location>
        <position position="384"/>
    </location>
</feature>
<feature type="modified residue" description="N6-acetyllysine" evidence="8">
    <location>
        <position position="386"/>
    </location>
</feature>
<feature type="modified residue" description="N6-acetyllysine; alternate" evidence="3">
    <location>
        <position position="390"/>
    </location>
</feature>
<feature type="modified residue" description="N6-succinyllysine; alternate" evidence="3">
    <location>
        <position position="390"/>
    </location>
</feature>
<feature type="modified residue" description="N6-acetyllysine" evidence="8">
    <location>
        <position position="399"/>
    </location>
</feature>
<feature type="modified residue" description="Phosphothreonine" evidence="2">
    <location>
        <position position="410"/>
    </location>
</feature>
<feature type="modified residue" description="N6-acetyllysine; alternate" evidence="8">
    <location>
        <position position="415"/>
    </location>
</feature>
<feature type="modified residue" description="N6-succinyllysine; alternate" evidence="8">
    <location>
        <position position="415"/>
    </location>
</feature>
<feature type="modified residue" description="N6-acetyllysine; alternate" evidence="8">
    <location>
        <position position="457"/>
    </location>
</feature>
<feature type="modified residue" description="N6-malonyllysine; alternate" evidence="8">
    <location>
        <position position="457"/>
    </location>
</feature>
<feature type="modified residue" description="N6-succinyllysine; alternate" evidence="8">
    <location>
        <position position="457"/>
    </location>
</feature>
<feature type="modified residue" description="N6-acetyllysine; alternate" evidence="3">
    <location>
        <position position="477"/>
    </location>
</feature>
<feature type="modified residue" description="N6-succinyllysine; alternate" evidence="3">
    <location>
        <position position="477"/>
    </location>
</feature>
<feature type="modified residue" description="N6-acetyllysine; alternate" evidence="8">
    <location>
        <position position="480"/>
    </location>
</feature>
<feature type="modified residue" description="N6-succinyllysine; alternate" evidence="3">
    <location>
        <position position="480"/>
    </location>
</feature>
<feature type="modified residue" description="N6-acetyllysine; alternate" evidence="8">
    <location>
        <position position="503"/>
    </location>
</feature>
<feature type="modified residue" description="N6-malonyllysine; alternate" evidence="8">
    <location>
        <position position="503"/>
    </location>
</feature>
<feature type="modified residue" description="N6-succinyllysine; alternate" evidence="8">
    <location>
        <position position="503"/>
    </location>
</feature>
<feature type="modified residue" description="Phosphotyrosine" evidence="1">
    <location>
        <position position="512"/>
    </location>
</feature>
<feature type="modified residue" description="N6-acetyllysine; alternate" evidence="8">
    <location>
        <position position="527"/>
    </location>
</feature>
<feature type="modified residue" description="N6-malonyllysine; alternate" evidence="8">
    <location>
        <position position="527"/>
    </location>
</feature>
<feature type="modified residue" description="N6-succinyllysine; alternate" evidence="8">
    <location>
        <position position="527"/>
    </location>
</feature>
<feature type="modified residue" description="N6-acetyllysine; alternate" evidence="8">
    <location>
        <position position="545"/>
    </location>
</feature>
<feature type="modified residue" description="N6-succinyllysine; alternate" evidence="8">
    <location>
        <position position="545"/>
    </location>
</feature>
<feature type="sequence conflict" description="In Ref. 2; AAI03337." evidence="11" ref="2">
    <original>Y</original>
    <variation>C</variation>
    <location>
        <position position="4"/>
    </location>
</feature>
<feature type="sequence conflict" description="In Ref. 2; AAI03337." evidence="11" ref="2">
    <original>A</original>
    <variation>I</variation>
    <location>
        <position position="14"/>
    </location>
</feature>
<feature type="sequence conflict" description="In Ref. 2; AAI03337." evidence="11" ref="2">
    <original>AS</original>
    <variation>VA</variation>
    <location>
        <begin position="22"/>
        <end position="23"/>
    </location>
</feature>
<feature type="sequence conflict" description="In Ref. 2; AAI03337." evidence="11" ref="2">
    <original>A</original>
    <variation>V</variation>
    <location>
        <position position="28"/>
    </location>
</feature>
<feature type="sequence conflict" description="In Ref. 2; AAI03337." evidence="11" ref="2">
    <original>W</original>
    <variation>R</variation>
    <location>
        <position position="32"/>
    </location>
</feature>
<feature type="sequence conflict" description="In Ref. 2; AAI03337." evidence="11" ref="2">
    <original>PA</original>
    <variation>AAAAV</variation>
    <location>
        <begin position="37"/>
        <end position="38"/>
    </location>
</feature>
<feature type="sequence conflict" description="In Ref. 3; AA sequence." evidence="11" ref="3">
    <original>ETE</original>
    <variation>QTQ</variation>
    <location>
        <begin position="93"/>
        <end position="95"/>
    </location>
</feature>
<feature type="sequence conflict" description="In Ref. 2; AAI03337 and 3; AA sequence." evidence="11" ref="2 3">
    <original>S</original>
    <variation>G</variation>
    <location>
        <position position="104"/>
    </location>
</feature>
<feature type="sequence conflict" description="In Ref. 3; AA sequence." evidence="11" ref="3">
    <original>QH</original>
    <variation>HQ</variation>
    <location>
        <begin position="141"/>
        <end position="142"/>
    </location>
</feature>
<feature type="sequence conflict" description="In Ref. 3; AA sequence." evidence="11" ref="3">
    <original>NE</original>
    <variation>ED</variation>
    <location>
        <begin position="196"/>
        <end position="197"/>
    </location>
</feature>
<feature type="sequence conflict" description="In Ref. 3; AA sequence." evidence="11" ref="3">
    <original>D</original>
    <variation>N</variation>
    <location>
        <position position="225"/>
    </location>
</feature>
<feature type="sequence conflict" description="In Ref. 3; AA sequence." evidence="11" ref="3">
    <original>GKP</original>
    <variation>KPG</variation>
    <location>
        <begin position="257"/>
        <end position="259"/>
    </location>
</feature>
<feature type="sequence conflict" description="In Ref. 3; AA sequence." evidence="11" ref="3">
    <original>HG</original>
    <variation>GH</variation>
    <location>
        <begin position="278"/>
        <end position="279"/>
    </location>
</feature>
<feature type="sequence conflict" description="In Ref. 2; AAI03337 and 3; AA sequence." evidence="11" ref="2 3">
    <original>V</original>
    <variation>A</variation>
    <location>
        <position position="305"/>
    </location>
</feature>
<feature type="sequence conflict" description="In Ref. 2; AAI03337 and 3; AA sequence." evidence="11" ref="2 3">
    <original>I</original>
    <variation>V</variation>
    <location>
        <position position="328"/>
    </location>
</feature>
<feature type="sequence conflict" description="In Ref. 2; AAI03337." evidence="11" ref="2">
    <original>T</original>
    <variation>A</variation>
    <location>
        <position position="329"/>
    </location>
</feature>
<feature type="sequence conflict" description="In Ref. 1; AAP55683." evidence="11" ref="1">
    <original>T</original>
    <variation>P</variation>
    <location>
        <position position="389"/>
    </location>
</feature>
<feature type="sequence conflict" description="In Ref. 3; AA sequence." evidence="11" ref="3">
    <original>E</original>
    <variation>Q</variation>
    <location>
        <position position="412"/>
    </location>
</feature>
<feature type="sequence conflict" description="In Ref. 3; AA sequence." evidence="11" ref="3">
    <original>EW</original>
    <variation>QI</variation>
    <location>
        <begin position="441"/>
        <end position="442"/>
    </location>
</feature>
<feature type="sequence conflict" description="In Ref. 2; AAI03337 and 3; AA sequence." evidence="11" ref="2 3">
    <original>N</original>
    <variation>K</variation>
    <location>
        <position position="444"/>
    </location>
</feature>
<feature type="strand" evidence="14">
    <location>
        <begin position="60"/>
        <end position="62"/>
    </location>
</feature>
<feature type="helix" evidence="20">
    <location>
        <begin position="66"/>
        <end position="87"/>
    </location>
</feature>
<feature type="turn" evidence="18">
    <location>
        <begin position="88"/>
        <end position="90"/>
    </location>
</feature>
<feature type="strand" evidence="20">
    <location>
        <begin position="91"/>
        <end position="93"/>
    </location>
</feature>
<feature type="helix" evidence="20">
    <location>
        <begin position="95"/>
        <end position="109"/>
    </location>
</feature>
<feature type="strand" evidence="17">
    <location>
        <begin position="113"/>
        <end position="123"/>
    </location>
</feature>
<feature type="strand" evidence="12">
    <location>
        <begin position="125"/>
        <end position="127"/>
    </location>
</feature>
<feature type="strand" evidence="17">
    <location>
        <begin position="129"/>
        <end position="138"/>
    </location>
</feature>
<feature type="strand" evidence="17">
    <location>
        <begin position="143"/>
        <end position="155"/>
    </location>
</feature>
<feature type="helix" evidence="17">
    <location>
        <begin position="158"/>
        <end position="174"/>
    </location>
</feature>
<feature type="strand" evidence="17">
    <location>
        <begin position="180"/>
        <end position="187"/>
    </location>
</feature>
<feature type="helix" evidence="17">
    <location>
        <begin position="190"/>
        <end position="192"/>
    </location>
</feature>
<feature type="helix" evidence="17">
    <location>
        <begin position="195"/>
        <end position="211"/>
    </location>
</feature>
<feature type="strand" evidence="17">
    <location>
        <begin position="214"/>
        <end position="216"/>
    </location>
</feature>
<feature type="turn" evidence="17">
    <location>
        <begin position="217"/>
        <end position="219"/>
    </location>
</feature>
<feature type="strand" evidence="17">
    <location>
        <begin position="220"/>
        <end position="223"/>
    </location>
</feature>
<feature type="strand" evidence="20">
    <location>
        <begin position="226"/>
        <end position="228"/>
    </location>
</feature>
<feature type="helix" evidence="17">
    <location>
        <begin position="230"/>
        <end position="242"/>
    </location>
</feature>
<feature type="turn" evidence="17">
    <location>
        <begin position="243"/>
        <end position="245"/>
    </location>
</feature>
<feature type="helix" evidence="17">
    <location>
        <begin position="251"/>
        <end position="253"/>
    </location>
</feature>
<feature type="strand" evidence="15">
    <location>
        <begin position="255"/>
        <end position="257"/>
    </location>
</feature>
<feature type="helix" evidence="17">
    <location>
        <begin position="260"/>
        <end position="262"/>
    </location>
</feature>
<feature type="strand" evidence="15">
    <location>
        <begin position="268"/>
        <end position="270"/>
    </location>
</feature>
<feature type="helix" evidence="17">
    <location>
        <begin position="271"/>
        <end position="281"/>
    </location>
</feature>
<feature type="helix" evidence="20">
    <location>
        <begin position="287"/>
        <end position="293"/>
    </location>
</feature>
<feature type="strand" evidence="20">
    <location>
        <begin position="297"/>
        <end position="299"/>
    </location>
</feature>
<feature type="strand" evidence="20">
    <location>
        <begin position="303"/>
        <end position="308"/>
    </location>
</feature>
<feature type="helix" evidence="20">
    <location>
        <begin position="311"/>
        <end position="322"/>
    </location>
</feature>
<feature type="strand" evidence="20">
    <location>
        <begin position="326"/>
        <end position="332"/>
    </location>
</feature>
<feature type="strand" evidence="20">
    <location>
        <begin position="335"/>
        <end position="338"/>
    </location>
</feature>
<feature type="helix" evidence="20">
    <location>
        <begin position="345"/>
        <end position="355"/>
    </location>
</feature>
<feature type="strand" evidence="20">
    <location>
        <begin position="356"/>
        <end position="358"/>
    </location>
</feature>
<feature type="strand" evidence="20">
    <location>
        <begin position="364"/>
        <end position="366"/>
    </location>
</feature>
<feature type="helix" evidence="20">
    <location>
        <begin position="371"/>
        <end position="373"/>
    </location>
</feature>
<feature type="strand" evidence="20">
    <location>
        <begin position="377"/>
        <end position="381"/>
    </location>
</feature>
<feature type="strand" evidence="20">
    <location>
        <begin position="383"/>
        <end position="385"/>
    </location>
</feature>
<feature type="turn" evidence="20">
    <location>
        <begin position="390"/>
        <end position="392"/>
    </location>
</feature>
<feature type="helix" evidence="20">
    <location>
        <begin position="393"/>
        <end position="395"/>
    </location>
</feature>
<feature type="strand" evidence="20">
    <location>
        <begin position="399"/>
        <end position="402"/>
    </location>
</feature>
<feature type="strand" evidence="20">
    <location>
        <begin position="405"/>
        <end position="407"/>
    </location>
</feature>
<feature type="helix" evidence="20">
    <location>
        <begin position="411"/>
        <end position="419"/>
    </location>
</feature>
<feature type="strand" evidence="20">
    <location>
        <begin position="423"/>
        <end position="425"/>
    </location>
</feature>
<feature type="helix" evidence="17">
    <location>
        <begin position="430"/>
        <end position="432"/>
    </location>
</feature>
<feature type="helix" evidence="17">
    <location>
        <begin position="433"/>
        <end position="447"/>
    </location>
</feature>
<feature type="turn" evidence="17">
    <location>
        <begin position="451"/>
        <end position="455"/>
    </location>
</feature>
<feature type="helix" evidence="17">
    <location>
        <begin position="456"/>
        <end position="474"/>
    </location>
</feature>
<feature type="turn" evidence="17">
    <location>
        <begin position="475"/>
        <end position="477"/>
    </location>
</feature>
<feature type="strand" evidence="19">
    <location>
        <begin position="480"/>
        <end position="482"/>
    </location>
</feature>
<feature type="helix" evidence="17">
    <location>
        <begin position="491"/>
        <end position="497"/>
    </location>
</feature>
<feature type="helix" evidence="17">
    <location>
        <begin position="502"/>
        <end position="525"/>
    </location>
</feature>
<feature type="turn" evidence="13">
    <location>
        <begin position="527"/>
        <end position="529"/>
    </location>
</feature>
<feature type="helix" evidence="17">
    <location>
        <begin position="535"/>
        <end position="545"/>
    </location>
</feature>
<feature type="helix" evidence="16">
    <location>
        <begin position="551"/>
        <end position="553"/>
    </location>
</feature>
<feature type="turn" evidence="14">
    <location>
        <begin position="554"/>
        <end position="556"/>
    </location>
</feature>
<name>DHE3_BOVIN</name>
<evidence type="ECO:0000250" key="1">
    <source>
        <dbReference type="UniProtKB" id="P00367"/>
    </source>
</evidence>
<evidence type="ECO:0000250" key="2">
    <source>
        <dbReference type="UniProtKB" id="P10860"/>
    </source>
</evidence>
<evidence type="ECO:0000250" key="3">
    <source>
        <dbReference type="UniProtKB" id="P26443"/>
    </source>
</evidence>
<evidence type="ECO:0000255" key="4">
    <source>
        <dbReference type="PROSITE-ProRule" id="PRU10011"/>
    </source>
</evidence>
<evidence type="ECO:0000269" key="5">
    <source>
    </source>
</evidence>
<evidence type="ECO:0000269" key="6">
    <source>
    </source>
</evidence>
<evidence type="ECO:0000269" key="7">
    <source>
    </source>
</evidence>
<evidence type="ECO:0000269" key="8">
    <source>
    </source>
</evidence>
<evidence type="ECO:0000269" key="9">
    <source>
    </source>
</evidence>
<evidence type="ECO:0000269" key="10">
    <source>
    </source>
</evidence>
<evidence type="ECO:0000305" key="11"/>
<evidence type="ECO:0007829" key="12">
    <source>
        <dbReference type="PDB" id="1HWY"/>
    </source>
</evidence>
<evidence type="ECO:0007829" key="13">
    <source>
        <dbReference type="PDB" id="1NQT"/>
    </source>
</evidence>
<evidence type="ECO:0007829" key="14">
    <source>
        <dbReference type="PDB" id="3ETD"/>
    </source>
</evidence>
<evidence type="ECO:0007829" key="15">
    <source>
        <dbReference type="PDB" id="3ETG"/>
    </source>
</evidence>
<evidence type="ECO:0007829" key="16">
    <source>
        <dbReference type="PDB" id="3JCZ"/>
    </source>
</evidence>
<evidence type="ECO:0007829" key="17">
    <source>
        <dbReference type="PDB" id="5K12"/>
    </source>
</evidence>
<evidence type="ECO:0007829" key="18">
    <source>
        <dbReference type="PDB" id="6DHK"/>
    </source>
</evidence>
<evidence type="ECO:0007829" key="19">
    <source>
        <dbReference type="PDB" id="6DHQ"/>
    </source>
</evidence>
<evidence type="ECO:0007829" key="20">
    <source>
        <dbReference type="PDB" id="7VDA"/>
    </source>
</evidence>
<keyword id="KW-0002">3D-structure</keyword>
<keyword id="KW-0007">Acetylation</keyword>
<keyword id="KW-0013">ADP-ribosylation</keyword>
<keyword id="KW-0067">ATP-binding</keyword>
<keyword id="KW-0903">Direct protein sequencing</keyword>
<keyword id="KW-0256">Endoplasmic reticulum</keyword>
<keyword id="KW-0342">GTP-binding</keyword>
<keyword id="KW-0379">Hydroxylation</keyword>
<keyword id="KW-0496">Mitochondrion</keyword>
<keyword id="KW-0521">NADP</keyword>
<keyword id="KW-0547">Nucleotide-binding</keyword>
<keyword id="KW-0560">Oxidoreductase</keyword>
<keyword id="KW-0597">Phosphoprotein</keyword>
<keyword id="KW-1185">Reference proteome</keyword>
<keyword id="KW-0809">Transit peptide</keyword>
<organism>
    <name type="scientific">Bos taurus</name>
    <name type="common">Bovine</name>
    <dbReference type="NCBI Taxonomy" id="9913"/>
    <lineage>
        <taxon>Eukaryota</taxon>
        <taxon>Metazoa</taxon>
        <taxon>Chordata</taxon>
        <taxon>Craniata</taxon>
        <taxon>Vertebrata</taxon>
        <taxon>Euteleostomi</taxon>
        <taxon>Mammalia</taxon>
        <taxon>Eutheria</taxon>
        <taxon>Laurasiatheria</taxon>
        <taxon>Artiodactyla</taxon>
        <taxon>Ruminantia</taxon>
        <taxon>Pecora</taxon>
        <taxon>Bovidae</taxon>
        <taxon>Bovinae</taxon>
        <taxon>Bos</taxon>
    </lineage>
</organism>
<protein>
    <recommendedName>
        <fullName>Glutamate dehydrogenase 1, mitochondrial</fullName>
        <shortName>GDH 1</shortName>
        <ecNumber evidence="7 9">1.4.1.3</ecNumber>
    </recommendedName>
</protein>
<accession>P00366</accession>
<accession>Q3SYY0</accession>
<accession>Q7YS29</accession>
<accession>Q8HZ49</accession>
<dbReference type="EC" id="1.4.1.3" evidence="7 9"/>
<dbReference type="EMBL" id="AY138843">
    <property type="protein sequence ID" value="AAN15276.1"/>
    <property type="molecule type" value="mRNA"/>
</dbReference>
<dbReference type="EMBL" id="AY256856">
    <property type="protein sequence ID" value="AAP55683.1"/>
    <property type="molecule type" value="mRNA"/>
</dbReference>
<dbReference type="EMBL" id="BC103336">
    <property type="protein sequence ID" value="AAI03337.1"/>
    <property type="molecule type" value="mRNA"/>
</dbReference>
<dbReference type="PIR" id="A92129">
    <property type="entry name" value="DEBOE"/>
</dbReference>
<dbReference type="RefSeq" id="NP_872593.2">
    <property type="nucleotide sequence ID" value="NM_182652.2"/>
</dbReference>
<dbReference type="PDB" id="1HWY">
    <property type="method" value="X-ray"/>
    <property type="resolution" value="3.20 A"/>
    <property type="chains" value="A/B/C/D/E/F=58-558"/>
</dbReference>
<dbReference type="PDB" id="1NQT">
    <property type="method" value="X-ray"/>
    <property type="resolution" value="3.50 A"/>
    <property type="chains" value="A/B/C/D/E/F/G/H/I/J/K/L=63-558"/>
</dbReference>
<dbReference type="PDB" id="1NR7">
    <property type="method" value="X-ray"/>
    <property type="resolution" value="3.30 A"/>
    <property type="chains" value="A/B/C/D/E/F/G/H/I/J/K/L=63-558"/>
</dbReference>
<dbReference type="PDB" id="3ETD">
    <property type="method" value="X-ray"/>
    <property type="resolution" value="2.50 A"/>
    <property type="chains" value="A/B/C/D/E/F=58-558"/>
</dbReference>
<dbReference type="PDB" id="3ETE">
    <property type="method" value="X-ray"/>
    <property type="resolution" value="3.00 A"/>
    <property type="chains" value="A/B/C/D/E/F=58-558"/>
</dbReference>
<dbReference type="PDB" id="3ETG">
    <property type="method" value="X-ray"/>
    <property type="resolution" value="2.50 A"/>
    <property type="chains" value="A/B/C/D/E/F=58-558"/>
</dbReference>
<dbReference type="PDB" id="3JCZ">
    <property type="method" value="EM"/>
    <property type="resolution" value="3.26 A"/>
    <property type="chains" value="A/B/C/D/E/F=58-558"/>
</dbReference>
<dbReference type="PDB" id="3JD0">
    <property type="method" value="EM"/>
    <property type="resolution" value="3.47 A"/>
    <property type="chains" value="A/B/C/D/E/F=58-558"/>
</dbReference>
<dbReference type="PDB" id="3JD1">
    <property type="method" value="EM"/>
    <property type="resolution" value="3.30 A"/>
    <property type="chains" value="A/B/C/D/E/F=58-558"/>
</dbReference>
<dbReference type="PDB" id="3JD2">
    <property type="method" value="EM"/>
    <property type="resolution" value="3.30 A"/>
    <property type="chains" value="A/B/C/D/E/F=58-558"/>
</dbReference>
<dbReference type="PDB" id="3JD3">
    <property type="method" value="EM"/>
    <property type="resolution" value="3.60 A"/>
    <property type="chains" value="A/B/C/D/E/F=58-558"/>
</dbReference>
<dbReference type="PDB" id="3JD4">
    <property type="method" value="EM"/>
    <property type="resolution" value="3.40 A"/>
    <property type="chains" value="A/B/C/D/E/F=58-558"/>
</dbReference>
<dbReference type="PDB" id="5K12">
    <property type="method" value="EM"/>
    <property type="resolution" value="1.80 A"/>
    <property type="chains" value="A/B/C/D/E/F=1-558"/>
</dbReference>
<dbReference type="PDB" id="6DHD">
    <property type="method" value="X-ray"/>
    <property type="resolution" value="2.50 A"/>
    <property type="chains" value="A/B/C/D/E/F=58-558"/>
</dbReference>
<dbReference type="PDB" id="6DHK">
    <property type="method" value="X-ray"/>
    <property type="resolution" value="3.50 A"/>
    <property type="chains" value="A/B/C/D/E/F/G/H/I/J/K/L=63-558"/>
</dbReference>
<dbReference type="PDB" id="6DHL">
    <property type="method" value="X-ray"/>
    <property type="resolution" value="3.62 A"/>
    <property type="chains" value="A/B/C/D/E/F/G/H/I/J/K/L=63-558"/>
</dbReference>
<dbReference type="PDB" id="6DHM">
    <property type="method" value="X-ray"/>
    <property type="resolution" value="3.00 A"/>
    <property type="chains" value="A/B/C/D/E/F=1-558"/>
</dbReference>
<dbReference type="PDB" id="6DHN">
    <property type="method" value="X-ray"/>
    <property type="resolution" value="3.30 A"/>
    <property type="chains" value="A/B/C/D/E/F=1-558"/>
</dbReference>
<dbReference type="PDB" id="6DHQ">
    <property type="method" value="X-ray"/>
    <property type="resolution" value="2.30 A"/>
    <property type="chains" value="A/B/C/D/E/F=58-558"/>
</dbReference>
<dbReference type="PDB" id="7VDA">
    <property type="method" value="EM"/>
    <property type="resolution" value="2.26 A"/>
    <property type="chains" value="A/B/C/D/E/F=1-558"/>
</dbReference>
<dbReference type="PDB" id="8EW0">
    <property type="method" value="EM"/>
    <property type="resolution" value="2.70 A"/>
    <property type="chains" value="A/B/C/D/E/F=1-558"/>
</dbReference>
<dbReference type="PDBsum" id="1HWY"/>
<dbReference type="PDBsum" id="1NQT"/>
<dbReference type="PDBsum" id="1NR7"/>
<dbReference type="PDBsum" id="3ETD"/>
<dbReference type="PDBsum" id="3ETE"/>
<dbReference type="PDBsum" id="3ETG"/>
<dbReference type="PDBsum" id="3JCZ"/>
<dbReference type="PDBsum" id="3JD0"/>
<dbReference type="PDBsum" id="3JD1"/>
<dbReference type="PDBsum" id="3JD2"/>
<dbReference type="PDBsum" id="3JD3"/>
<dbReference type="PDBsum" id="3JD4"/>
<dbReference type="PDBsum" id="5K12"/>
<dbReference type="PDBsum" id="6DHD"/>
<dbReference type="PDBsum" id="6DHK"/>
<dbReference type="PDBsum" id="6DHL"/>
<dbReference type="PDBsum" id="6DHM"/>
<dbReference type="PDBsum" id="6DHN"/>
<dbReference type="PDBsum" id="6DHQ"/>
<dbReference type="PDBsum" id="7VDA"/>
<dbReference type="PDBsum" id="8EW0"/>
<dbReference type="EMDB" id="EMD-28639"/>
<dbReference type="EMDB" id="EMD-31912"/>
<dbReference type="EMDB" id="EMD-6630"/>
<dbReference type="EMDB" id="EMD-6631"/>
<dbReference type="EMDB" id="EMD-6632"/>
<dbReference type="EMDB" id="EMD-6633"/>
<dbReference type="EMDB" id="EMD-6634"/>
<dbReference type="EMDB" id="EMD-6635"/>
<dbReference type="EMDB" id="EMD-8194"/>
<dbReference type="PCDDB" id="P00366"/>
<dbReference type="SMR" id="P00366"/>
<dbReference type="DIP" id="DIP-39002N"/>
<dbReference type="FunCoup" id="P00366">
    <property type="interactions" value="1819"/>
</dbReference>
<dbReference type="IntAct" id="P00366">
    <property type="interactions" value="1"/>
</dbReference>
<dbReference type="MINT" id="P00366"/>
<dbReference type="STRING" id="9913.ENSBTAP00000009923"/>
<dbReference type="BindingDB" id="P00366"/>
<dbReference type="ChEMBL" id="CHEMBL4628"/>
<dbReference type="GlyGen" id="P00366">
    <property type="glycosylation" value="1 site, 1 O-linked glycan (1 site)"/>
</dbReference>
<dbReference type="iPTMnet" id="P00366"/>
<dbReference type="PaxDb" id="9913-ENSBTAP00000009923"/>
<dbReference type="PeptideAtlas" id="P00366"/>
<dbReference type="GeneID" id="281785"/>
<dbReference type="KEGG" id="bta:281785"/>
<dbReference type="CTD" id="2746"/>
<dbReference type="eggNOG" id="KOG2250">
    <property type="taxonomic scope" value="Eukaryota"/>
</dbReference>
<dbReference type="HOGENOM" id="CLU_025763_1_0_1"/>
<dbReference type="InParanoid" id="P00366"/>
<dbReference type="OrthoDB" id="6718861at2759"/>
<dbReference type="TreeFam" id="TF313945"/>
<dbReference type="BRENDA" id="1.4.1.2">
    <property type="organism ID" value="908"/>
</dbReference>
<dbReference type="SABIO-RK" id="P00366"/>
<dbReference type="EvolutionaryTrace" id="P00366"/>
<dbReference type="Proteomes" id="UP000009136">
    <property type="component" value="Unplaced"/>
</dbReference>
<dbReference type="GO" id="GO:0005783">
    <property type="term" value="C:endoplasmic reticulum"/>
    <property type="evidence" value="ECO:0000250"/>
    <property type="project" value="UniProtKB"/>
</dbReference>
<dbReference type="GO" id="GO:0005743">
    <property type="term" value="C:mitochondrial inner membrane"/>
    <property type="evidence" value="ECO:0000250"/>
    <property type="project" value="AgBase"/>
</dbReference>
<dbReference type="GO" id="GO:0005739">
    <property type="term" value="C:mitochondrion"/>
    <property type="evidence" value="ECO:0000250"/>
    <property type="project" value="UniProtKB"/>
</dbReference>
<dbReference type="GO" id="GO:0005524">
    <property type="term" value="F:ATP binding"/>
    <property type="evidence" value="ECO:0007669"/>
    <property type="project" value="UniProtKB-KW"/>
</dbReference>
<dbReference type="GO" id="GO:0004352">
    <property type="term" value="F:glutamate dehydrogenase (NAD+) activity"/>
    <property type="evidence" value="ECO:0000250"/>
    <property type="project" value="AgBase"/>
</dbReference>
<dbReference type="GO" id="GO:0004354">
    <property type="term" value="F:glutamate dehydrogenase (NADP+) activity"/>
    <property type="evidence" value="ECO:0007669"/>
    <property type="project" value="RHEA"/>
</dbReference>
<dbReference type="GO" id="GO:0004353">
    <property type="term" value="F:glutamate dehydrogenase [NAD(P)+] activity"/>
    <property type="evidence" value="ECO:0000250"/>
    <property type="project" value="AgBase"/>
</dbReference>
<dbReference type="GO" id="GO:0005525">
    <property type="term" value="F:GTP binding"/>
    <property type="evidence" value="ECO:0007669"/>
    <property type="project" value="UniProtKB-KW"/>
</dbReference>
<dbReference type="GO" id="GO:0042802">
    <property type="term" value="F:identical protein binding"/>
    <property type="evidence" value="ECO:0000353"/>
    <property type="project" value="IntAct"/>
</dbReference>
<dbReference type="GO" id="GO:0006538">
    <property type="term" value="P:glutamate catabolic process"/>
    <property type="evidence" value="ECO:0000250"/>
    <property type="project" value="AgBase"/>
</dbReference>
<dbReference type="GO" id="GO:0006541">
    <property type="term" value="P:glutamine metabolic process"/>
    <property type="evidence" value="ECO:0000250"/>
    <property type="project" value="UniProtKB"/>
</dbReference>
<dbReference type="GO" id="GO:0072350">
    <property type="term" value="P:tricarboxylic acid metabolic process"/>
    <property type="evidence" value="ECO:0000250"/>
    <property type="project" value="UniProtKB"/>
</dbReference>
<dbReference type="CDD" id="cd01076">
    <property type="entry name" value="NAD_bind_1_Glu_DH"/>
    <property type="match status" value="1"/>
</dbReference>
<dbReference type="FunFam" id="1.10.287.140:FF:000001">
    <property type="entry name" value="Glutamate dehydrogenase 1, mitochondrial"/>
    <property type="match status" value="1"/>
</dbReference>
<dbReference type="FunFam" id="3.40.50.10860:FF:000007">
    <property type="entry name" value="Glutamate dehydrogenase 1, mitochondrial"/>
    <property type="match status" value="1"/>
</dbReference>
<dbReference type="FunFam" id="3.40.50.720:FF:000100">
    <property type="entry name" value="Glutamate dehydrogenase 1, mitochondrial"/>
    <property type="match status" value="1"/>
</dbReference>
<dbReference type="Gene3D" id="1.10.287.140">
    <property type="match status" value="1"/>
</dbReference>
<dbReference type="Gene3D" id="3.40.50.10860">
    <property type="entry name" value="Leucine Dehydrogenase, chain A, domain 1"/>
    <property type="match status" value="1"/>
</dbReference>
<dbReference type="Gene3D" id="3.40.50.720">
    <property type="entry name" value="NAD(P)-binding Rossmann-like Domain"/>
    <property type="match status" value="1"/>
</dbReference>
<dbReference type="InterPro" id="IPR046346">
    <property type="entry name" value="Aminoacid_DH-like_N_sf"/>
</dbReference>
<dbReference type="InterPro" id="IPR006095">
    <property type="entry name" value="Glu/Leu/Phe/Val/Trp_DH"/>
</dbReference>
<dbReference type="InterPro" id="IPR006096">
    <property type="entry name" value="Glu/Leu/Phe/Val/Trp_DH_C"/>
</dbReference>
<dbReference type="InterPro" id="IPR006097">
    <property type="entry name" value="Glu/Leu/Phe/Val/Trp_DH_dimer"/>
</dbReference>
<dbReference type="InterPro" id="IPR033524">
    <property type="entry name" value="Glu/Leu/Phe/Val_DH_AS"/>
</dbReference>
<dbReference type="InterPro" id="IPR036291">
    <property type="entry name" value="NAD(P)-bd_dom_sf"/>
</dbReference>
<dbReference type="InterPro" id="IPR033922">
    <property type="entry name" value="NAD_bind_Glu_DH"/>
</dbReference>
<dbReference type="PANTHER" id="PTHR11606">
    <property type="entry name" value="GLUTAMATE DEHYDROGENASE"/>
    <property type="match status" value="1"/>
</dbReference>
<dbReference type="PANTHER" id="PTHR11606:SF13">
    <property type="entry name" value="GLUTAMATE DEHYDROGENASE 1, MITOCHONDRIAL"/>
    <property type="match status" value="1"/>
</dbReference>
<dbReference type="Pfam" id="PF00208">
    <property type="entry name" value="ELFV_dehydrog"/>
    <property type="match status" value="1"/>
</dbReference>
<dbReference type="Pfam" id="PF02812">
    <property type="entry name" value="ELFV_dehydrog_N"/>
    <property type="match status" value="1"/>
</dbReference>
<dbReference type="PRINTS" id="PR00082">
    <property type="entry name" value="GLFDHDRGNASE"/>
</dbReference>
<dbReference type="SMART" id="SM00839">
    <property type="entry name" value="ELFV_dehydrog"/>
    <property type="match status" value="1"/>
</dbReference>
<dbReference type="SUPFAM" id="SSF53223">
    <property type="entry name" value="Aminoacid dehydrogenase-like, N-terminal domain"/>
    <property type="match status" value="1"/>
</dbReference>
<dbReference type="SUPFAM" id="SSF51735">
    <property type="entry name" value="NAD(P)-binding Rossmann-fold domains"/>
    <property type="match status" value="1"/>
</dbReference>
<dbReference type="PROSITE" id="PS00074">
    <property type="entry name" value="GLFV_DEHYDROGENASE"/>
    <property type="match status" value="1"/>
</dbReference>
<comment type="function">
    <text evidence="1 2 7 9">Mitochondrial glutamate dehydrogenase that converts L-glutamate into alpha-ketoglutarate. Plays a key role in glutamine anaplerosis by producing alpha-ketoglutarate, an important intermediate in the tricarboxylic acid cycle (PubMed:14659072, PubMed:4365183). Plays a role in insulin homeostasis (By similarity). May be involved in learning and memory reactions by increasing the turnover of the excitatory neurotransmitter glutamate (By similarity).</text>
</comment>
<comment type="catalytic activity">
    <reaction evidence="7 9">
        <text>L-glutamate + NAD(+) + H2O = 2-oxoglutarate + NH4(+) + NADH + H(+)</text>
        <dbReference type="Rhea" id="RHEA:15133"/>
        <dbReference type="ChEBI" id="CHEBI:15377"/>
        <dbReference type="ChEBI" id="CHEBI:15378"/>
        <dbReference type="ChEBI" id="CHEBI:16810"/>
        <dbReference type="ChEBI" id="CHEBI:28938"/>
        <dbReference type="ChEBI" id="CHEBI:29985"/>
        <dbReference type="ChEBI" id="CHEBI:57540"/>
        <dbReference type="ChEBI" id="CHEBI:57945"/>
        <dbReference type="EC" id="1.4.1.3"/>
    </reaction>
</comment>
<comment type="catalytic activity">
    <reaction evidence="1">
        <text>L-glutamate + NADP(+) + H2O = 2-oxoglutarate + NH4(+) + NADPH + H(+)</text>
        <dbReference type="Rhea" id="RHEA:11612"/>
        <dbReference type="ChEBI" id="CHEBI:15377"/>
        <dbReference type="ChEBI" id="CHEBI:15378"/>
        <dbReference type="ChEBI" id="CHEBI:16810"/>
        <dbReference type="ChEBI" id="CHEBI:28938"/>
        <dbReference type="ChEBI" id="CHEBI:29985"/>
        <dbReference type="ChEBI" id="CHEBI:57783"/>
        <dbReference type="ChEBI" id="CHEBI:58349"/>
        <dbReference type="EC" id="1.4.1.3"/>
    </reaction>
</comment>
<comment type="activity regulation">
    <text evidence="1 3 7">Subject to allosteric regulation. Activated by ADP (PubMed:14659072). Inhibited by GTP and ATP (PubMed:14659072). ADP can occupy the NADH binding site and activate the enzyme. Inhibited by SIRT4 (By similarity). Inhibited by HADH (By similarity).</text>
</comment>
<comment type="biophysicochemical properties">
    <kinetics>
        <KM evidence="7">0.1 mM for NAD(+)</KM>
        <Vmax evidence="7">100.0 umol/min/mg enzyme with NAD(+)as substrate</Vmax>
    </kinetics>
</comment>
<comment type="subunit">
    <text evidence="3 5 6">Homohexamer (PubMed:11254391, PubMed:12653548). Interacts with HADH; this interaction inhibits the activation of GLUD1 (By similarity).</text>
</comment>
<comment type="interaction">
    <interactant intactId="EBI-1221442">
        <id>P00366</id>
    </interactant>
    <interactant intactId="EBI-1221442">
        <id>P00366</id>
        <label>GLUD1</label>
    </interactant>
    <organismsDiffer>false</organismsDiffer>
    <experiments>2</experiments>
</comment>
<comment type="subcellular location">
    <subcellularLocation>
        <location evidence="1">Mitochondrion</location>
    </subcellularLocation>
    <subcellularLocation>
        <location evidence="1">Endoplasmic reticulum</location>
    </subcellularLocation>
    <text evidence="1">Mostly translocates into the mitochondria, only a small amount of the protein localizes to the endoplasmic reticulum.</text>
</comment>
<comment type="PTM">
    <text evidence="1">ADP-ribosylated by SIRT4, leading to inactivate glutamate dehydrogenase activity. Stoichiometry shows that ADP-ribosylation occurs in one subunit per catalytically active homohexamer.</text>
</comment>
<comment type="similarity">
    <text evidence="11">Belongs to the Glu/Leu/Phe/Val dehydrogenases family.</text>
</comment>
<sequence length="558" mass="61512">MYRYLGEALLLSRAGPAALGSASADSAALLGWARGQPAAAPQPGLVPPARRHYSEAAADREDDPNFFKMVEGFFDRGASIVEDKLVEDLKTRETEEQKRNRVRSILRIIKPCNHVLSLSFPIRRDDGSWEVIEGYRAQHSQHRTPCKGGIRYSTDVSVDEVKALASLMTYKCAVVDVPFGGAKAGVKINPKNYTDNELEKITRRFTMELAKKGFIGPGVDVPAPDMSTGEREMSWIADTYASTIGHYDINAHACVTGKPISQGGIHGRISATGRGVFHGIENFINEASYMSILGMTPGFGDKTFVVQGFGNVGLHSMRYLHRFGAKCITVGESDGSIWNPDGIDPKELEDFKLQHGTILGFPKAKIYEGSILEVDCDILIPAASEKQLTKSNAPRVKAKIIAEGANGPTTPEADKIFLERNIMVIPDLYLNAGGVTVSYFEWLNNLNHVSYGRLTFKYERDSNYHLLMSVQESLERKFGKHGGTIPIVPTAEFQDRISGASEKDIVHSGLAYTMERSARQIMRTAMKYNLGLDLRTAAYVNAIEKVFRVYNEAGVTFT</sequence>
<gene>
    <name type="primary">GLUD1</name>
    <name type="synonym">GLUD</name>
</gene>
<reference key="1">
    <citation type="journal article" date="2003" name="J. Biochem. Mol. Biol.">
        <title>Molecular gene cloning, expression, and characterization of bovine brain glutamate dehydrogenase.</title>
        <authorList>
            <person name="Kim D.W."/>
            <person name="Eum W.S."/>
            <person name="Jang S.H."/>
            <person name="Yoon C.S."/>
            <person name="Kim Y.H."/>
            <person name="Choi S.H."/>
            <person name="Choi H.S."/>
            <person name="Kim S.Y."/>
            <person name="Kwon H.Y."/>
            <person name="Kang J.H."/>
            <person name="Kwon O.-S."/>
            <person name="Cho S.-W."/>
            <person name="Park J."/>
            <person name="Choi S.Y."/>
        </authorList>
    </citation>
    <scope>NUCLEOTIDE SEQUENCE [MRNA]</scope>
    <scope>FUNCTION</scope>
    <scope>CATALYTIC ACTIVITY</scope>
    <scope>ACTIVITY REGULATION</scope>
    <scope>BIOPHYSICOCHEMICAL PROPERTIES</scope>
    <source>
        <tissue>Brain</tissue>
    </source>
</reference>
<reference key="2">
    <citation type="submission" date="2005-08" db="EMBL/GenBank/DDBJ databases">
        <authorList>
            <consortium name="NIH - Mammalian Gene Collection (MGC) project"/>
        </authorList>
    </citation>
    <scope>NUCLEOTIDE SEQUENCE [LARGE SCALE MRNA]</scope>
    <source>
        <strain>Crossbred X Angus</strain>
        <tissue>Ileum</tissue>
    </source>
</reference>
<reference key="3">
    <citation type="journal article" date="1973" name="J. Biol. Chem.">
        <title>Sequence of bovine liver glutamate dehydrogenase. 8. Peptides produced by specific chemical cleavages; the complete sequence of the protein.</title>
        <authorList>
            <person name="Moon K."/>
            <person name="Smith E.L."/>
        </authorList>
    </citation>
    <scope>PROTEIN SEQUENCE OF 58-558</scope>
    <source>
        <tissue>Liver</tissue>
    </source>
</reference>
<reference key="4">
    <citation type="journal article" date="1979" name="J. Biol. Chem.">
        <title>Partial amino acid sequence of the glutamate dehydrogenase of human liver and a revision of the sequence of the bovine enzyme.</title>
        <authorList>
            <person name="Julliard J.H."/>
            <person name="Smith E.L."/>
        </authorList>
    </citation>
    <scope>SEQUENCE REVISION TO 440-441</scope>
</reference>
<reference key="5">
    <citation type="journal article" date="1974" name="Eur. J. Biochem.">
        <title>Studies of glutamate dehydrogenase: chemical modification and quantitative determination of tryptophan residues.</title>
        <authorList>
            <person name="Witzemann V."/>
            <person name="Koberstein R."/>
            <person name="Sund H."/>
            <person name="Rasched I."/>
            <person name="Joernvall H."/>
            <person name="Noack K."/>
        </authorList>
    </citation>
    <scope>CATALYTIC ACTIVITY</scope>
    <scope>FUNCTION</scope>
</reference>
<reference key="6">
    <citation type="journal article" date="1974" name="Eur. J. Biochem.">
        <title>Studies of glutamate dehydrogenase. Identification of an amino group involved in the substrate binding.</title>
        <authorList>
            <person name="Rasched I."/>
            <person name="Joernvall H."/>
            <person name="Sund H."/>
        </authorList>
    </citation>
    <scope>PRELIMINARY STUDIES OF SUBSTRATE-BINDING SITE</scope>
</reference>
<reference key="7">
    <citation type="journal article" date="2011" name="Science">
        <title>Sirt5 is a NAD-dependent protein lysine demalonylase and desuccinylase.</title>
        <authorList>
            <person name="Du J."/>
            <person name="Zhou Y."/>
            <person name="Su X."/>
            <person name="Yu J.J."/>
            <person name="Khan S."/>
            <person name="Jiang H."/>
            <person name="Kim J."/>
            <person name="Woo J."/>
            <person name="Kim J.H."/>
            <person name="Choi B.H."/>
            <person name="He B."/>
            <person name="Chen W."/>
            <person name="Zhang S."/>
            <person name="Cerione R.A."/>
            <person name="Auwerx J."/>
            <person name="Hao Q."/>
            <person name="Lin H."/>
        </authorList>
    </citation>
    <scope>ACETYLATION AT LYS-84; LYS-90; LYS-110; LYS-162; LYS-183; LYS-191; LYS-363; LYS-365; LYS-386; LYS-399; LYS-415; LYS-457; LYS-480; LYS-503; LYS-527 AND LYS-545</scope>
    <scope>MALONYLATION AT LYS-457; LYS-503 AND LYS-527</scope>
    <scope>SUCCINYLATION AT LYS-84; LYS-110; LYS-162; LYS-363; LYS-415; LYS-457; LYS-503; LYS-527 AND LYS-545</scope>
</reference>
<reference key="8">
    <citation type="journal article" date="1999" name="Structure">
        <title>The structure of bovine glutamate dehydrogenase provides insights into the mechanism of allostery.</title>
        <authorList>
            <person name="Peterson P.E."/>
            <person name="Smith T.J."/>
        </authorList>
    </citation>
    <scope>X-RAY CRYSTALLOGRAPHY (2.5 ANGSTROMS) OF 58-558</scope>
    <source>
        <tissue>Liver</tissue>
    </source>
</reference>
<reference key="9">
    <citation type="journal article" date="2001" name="J. Mol. Biol.">
        <title>Structures of bovine glutamate dehydrogenase complexes elucidate the mechanism of purine regulation.</title>
        <authorList>
            <person name="Smith T.J."/>
            <person name="Peterson P.E."/>
            <person name="Schmidt T."/>
            <person name="Fang J."/>
            <person name="Stanley C.A."/>
        </authorList>
    </citation>
    <scope>X-RAY CRYSTALLOGRAPHY (2.5 ANGSTROMS) OF 58-558 IN COMPLEX WITH SUBSTRATE; NADH AND GTP</scope>
</reference>
<reference key="10">
    <citation type="journal article" date="2003" name="Biochemistry">
        <title>Structural studies on ADP activation of mammalian glutamate dehydrogenase and the evolution of regulation.</title>
        <authorList>
            <person name="Banerjee S."/>
            <person name="Schmidt T."/>
            <person name="Fang J."/>
            <person name="Stanley C.A."/>
            <person name="Smith T.J."/>
        </authorList>
    </citation>
    <scope>X-RAY CRYSTALLOGRAPHY (3.5 ANGSTROMS) OF 25-520 ALONE AND IN COMPLEX WITH ADP</scope>
    <scope>HOMOHEXAMERIZATION</scope>
</reference>